<sequence length="158" mass="17656">MQAIPMTLRGAEKLREELDFLKSVRRPEIIAAIAEAREHGDLKENAEYHAAREQQGFCEGRIKDIEAKLSNAQVIDVTKMPNNGRVIFGATVTVLNLDTDEEQTYRIVGDDEADFKQNLISVNSPIARGLIGKEQDDVVVIKTPGGDVEYEVLKVEYL</sequence>
<name>GREA_SALTY</name>
<accession>P64281</accession>
<accession>Q8XGQ9</accession>
<organism>
    <name type="scientific">Salmonella typhimurium (strain LT2 / SGSC1412 / ATCC 700720)</name>
    <dbReference type="NCBI Taxonomy" id="99287"/>
    <lineage>
        <taxon>Bacteria</taxon>
        <taxon>Pseudomonadati</taxon>
        <taxon>Pseudomonadota</taxon>
        <taxon>Gammaproteobacteria</taxon>
        <taxon>Enterobacterales</taxon>
        <taxon>Enterobacteriaceae</taxon>
        <taxon>Salmonella</taxon>
    </lineage>
</organism>
<feature type="chain" id="PRO_0000176965" description="Transcription elongation factor GreA">
    <location>
        <begin position="1"/>
        <end position="158"/>
    </location>
</feature>
<comment type="function">
    <text evidence="1">Necessary for efficient RNA polymerase transcription elongation past template-encoded arresting sites. The arresting sites in DNA have the property of trapping a certain fraction of elongating RNA polymerases that pass through, resulting in locked ternary complexes. Cleavage of the nascent transcript by cleavage factors such as GreA or GreB allows the resumption of elongation from the new 3'terminus. GreA releases sequences of 2 to 3 nucleotides.</text>
</comment>
<comment type="similarity">
    <text evidence="1">Belongs to the GreA/GreB family.</text>
</comment>
<protein>
    <recommendedName>
        <fullName evidence="1">Transcription elongation factor GreA</fullName>
    </recommendedName>
    <alternativeName>
        <fullName evidence="1">Transcript cleavage factor GreA</fullName>
    </alternativeName>
</protein>
<dbReference type="EMBL" id="AE006468">
    <property type="protein sequence ID" value="AAL22169.1"/>
    <property type="molecule type" value="Genomic_DNA"/>
</dbReference>
<dbReference type="RefSeq" id="NP_462210.1">
    <property type="nucleotide sequence ID" value="NC_003197.2"/>
</dbReference>
<dbReference type="RefSeq" id="WP_001148008.1">
    <property type="nucleotide sequence ID" value="NC_003197.2"/>
</dbReference>
<dbReference type="SMR" id="P64281"/>
<dbReference type="STRING" id="99287.STM3299"/>
<dbReference type="PaxDb" id="99287-STM3299"/>
<dbReference type="GeneID" id="1254822"/>
<dbReference type="GeneID" id="66757638"/>
<dbReference type="KEGG" id="stm:STM3299"/>
<dbReference type="PATRIC" id="fig|99287.12.peg.3497"/>
<dbReference type="HOGENOM" id="CLU_101379_2_0_6"/>
<dbReference type="OMA" id="TWLTQEA"/>
<dbReference type="PhylomeDB" id="P64281"/>
<dbReference type="BioCyc" id="SENT99287:STM3299-MONOMER"/>
<dbReference type="PHI-base" id="PHI:7130"/>
<dbReference type="Proteomes" id="UP000001014">
    <property type="component" value="Chromosome"/>
</dbReference>
<dbReference type="GO" id="GO:0003677">
    <property type="term" value="F:DNA binding"/>
    <property type="evidence" value="ECO:0007669"/>
    <property type="project" value="UniProtKB-UniRule"/>
</dbReference>
<dbReference type="GO" id="GO:0070063">
    <property type="term" value="F:RNA polymerase binding"/>
    <property type="evidence" value="ECO:0007669"/>
    <property type="project" value="InterPro"/>
</dbReference>
<dbReference type="GO" id="GO:0006354">
    <property type="term" value="P:DNA-templated transcription elongation"/>
    <property type="evidence" value="ECO:0000318"/>
    <property type="project" value="GO_Central"/>
</dbReference>
<dbReference type="GO" id="GO:0032784">
    <property type="term" value="P:regulation of DNA-templated transcription elongation"/>
    <property type="evidence" value="ECO:0007669"/>
    <property type="project" value="UniProtKB-UniRule"/>
</dbReference>
<dbReference type="FunFam" id="1.10.287.180:FF:000001">
    <property type="entry name" value="Transcription elongation factor GreA"/>
    <property type="match status" value="1"/>
</dbReference>
<dbReference type="FunFam" id="3.10.50.30:FF:000001">
    <property type="entry name" value="Transcription elongation factor GreA"/>
    <property type="match status" value="1"/>
</dbReference>
<dbReference type="Gene3D" id="3.10.50.30">
    <property type="entry name" value="Transcription elongation factor, GreA/GreB, C-terminal domain"/>
    <property type="match status" value="1"/>
</dbReference>
<dbReference type="Gene3D" id="1.10.287.180">
    <property type="entry name" value="Transcription elongation factor, GreA/GreB, N-terminal domain"/>
    <property type="match status" value="1"/>
</dbReference>
<dbReference type="HAMAP" id="MF_00105">
    <property type="entry name" value="GreA_GreB"/>
    <property type="match status" value="1"/>
</dbReference>
<dbReference type="InterPro" id="IPR036953">
    <property type="entry name" value="GreA/GreB_C_sf"/>
</dbReference>
<dbReference type="InterPro" id="IPR018151">
    <property type="entry name" value="TF_GreA/GreB_CS"/>
</dbReference>
<dbReference type="InterPro" id="IPR006359">
    <property type="entry name" value="Tscrpt_elong_fac_GreA"/>
</dbReference>
<dbReference type="InterPro" id="IPR028624">
    <property type="entry name" value="Tscrpt_elong_fac_GreA/B"/>
</dbReference>
<dbReference type="InterPro" id="IPR001437">
    <property type="entry name" value="Tscrpt_elong_fac_GreA/B_C"/>
</dbReference>
<dbReference type="InterPro" id="IPR023459">
    <property type="entry name" value="Tscrpt_elong_fac_GreA/B_fam"/>
</dbReference>
<dbReference type="InterPro" id="IPR022691">
    <property type="entry name" value="Tscrpt_elong_fac_GreA/B_N"/>
</dbReference>
<dbReference type="InterPro" id="IPR036805">
    <property type="entry name" value="Tscrpt_elong_fac_GreA/B_N_sf"/>
</dbReference>
<dbReference type="NCBIfam" id="TIGR01462">
    <property type="entry name" value="greA"/>
    <property type="match status" value="1"/>
</dbReference>
<dbReference type="NCBIfam" id="NF001261">
    <property type="entry name" value="PRK00226.1-2"/>
    <property type="match status" value="1"/>
</dbReference>
<dbReference type="NCBIfam" id="NF001263">
    <property type="entry name" value="PRK00226.1-4"/>
    <property type="match status" value="1"/>
</dbReference>
<dbReference type="NCBIfam" id="NF001264">
    <property type="entry name" value="PRK00226.1-5"/>
    <property type="match status" value="1"/>
</dbReference>
<dbReference type="PANTHER" id="PTHR30437">
    <property type="entry name" value="TRANSCRIPTION ELONGATION FACTOR GREA"/>
    <property type="match status" value="1"/>
</dbReference>
<dbReference type="PANTHER" id="PTHR30437:SF4">
    <property type="entry name" value="TRANSCRIPTION ELONGATION FACTOR GREA"/>
    <property type="match status" value="1"/>
</dbReference>
<dbReference type="Pfam" id="PF01272">
    <property type="entry name" value="GreA_GreB"/>
    <property type="match status" value="1"/>
</dbReference>
<dbReference type="Pfam" id="PF03449">
    <property type="entry name" value="GreA_GreB_N"/>
    <property type="match status" value="1"/>
</dbReference>
<dbReference type="PIRSF" id="PIRSF006092">
    <property type="entry name" value="GreA_GreB"/>
    <property type="match status" value="1"/>
</dbReference>
<dbReference type="SUPFAM" id="SSF54534">
    <property type="entry name" value="FKBP-like"/>
    <property type="match status" value="1"/>
</dbReference>
<dbReference type="SUPFAM" id="SSF46557">
    <property type="entry name" value="GreA transcript cleavage protein, N-terminal domain"/>
    <property type="match status" value="1"/>
</dbReference>
<dbReference type="PROSITE" id="PS00829">
    <property type="entry name" value="GREAB_1"/>
    <property type="match status" value="1"/>
</dbReference>
<dbReference type="PROSITE" id="PS00830">
    <property type="entry name" value="GREAB_2"/>
    <property type="match status" value="1"/>
</dbReference>
<keyword id="KW-0238">DNA-binding</keyword>
<keyword id="KW-1185">Reference proteome</keyword>
<keyword id="KW-0804">Transcription</keyword>
<keyword id="KW-0805">Transcription regulation</keyword>
<evidence type="ECO:0000255" key="1">
    <source>
        <dbReference type="HAMAP-Rule" id="MF_00105"/>
    </source>
</evidence>
<reference key="1">
    <citation type="journal article" date="2001" name="Nature">
        <title>Complete genome sequence of Salmonella enterica serovar Typhimurium LT2.</title>
        <authorList>
            <person name="McClelland M."/>
            <person name="Sanderson K.E."/>
            <person name="Spieth J."/>
            <person name="Clifton S.W."/>
            <person name="Latreille P."/>
            <person name="Courtney L."/>
            <person name="Porwollik S."/>
            <person name="Ali J."/>
            <person name="Dante M."/>
            <person name="Du F."/>
            <person name="Hou S."/>
            <person name="Layman D."/>
            <person name="Leonard S."/>
            <person name="Nguyen C."/>
            <person name="Scott K."/>
            <person name="Holmes A."/>
            <person name="Grewal N."/>
            <person name="Mulvaney E."/>
            <person name="Ryan E."/>
            <person name="Sun H."/>
            <person name="Florea L."/>
            <person name="Miller W."/>
            <person name="Stoneking T."/>
            <person name="Nhan M."/>
            <person name="Waterston R."/>
            <person name="Wilson R.K."/>
        </authorList>
    </citation>
    <scope>NUCLEOTIDE SEQUENCE [LARGE SCALE GENOMIC DNA]</scope>
    <source>
        <strain>LT2 / SGSC1412 / ATCC 700720</strain>
    </source>
</reference>
<gene>
    <name evidence="1" type="primary">greA</name>
    <name type="ordered locus">STM3299</name>
</gene>
<proteinExistence type="inferred from homology"/>